<accession>B3QY27</accession>
<reference key="1">
    <citation type="submission" date="2008-06" db="EMBL/GenBank/DDBJ databases">
        <title>Complete sequence of Chloroherpeton thalassium ATCC 35110.</title>
        <authorList>
            <consortium name="US DOE Joint Genome Institute"/>
            <person name="Lucas S."/>
            <person name="Copeland A."/>
            <person name="Lapidus A."/>
            <person name="Glavina del Rio T."/>
            <person name="Dalin E."/>
            <person name="Tice H."/>
            <person name="Bruce D."/>
            <person name="Goodwin L."/>
            <person name="Pitluck S."/>
            <person name="Schmutz J."/>
            <person name="Larimer F."/>
            <person name="Land M."/>
            <person name="Hauser L."/>
            <person name="Kyrpides N."/>
            <person name="Mikhailova N."/>
            <person name="Liu Z."/>
            <person name="Li T."/>
            <person name="Zhao F."/>
            <person name="Overmann J."/>
            <person name="Bryant D.A."/>
            <person name="Richardson P."/>
        </authorList>
    </citation>
    <scope>NUCLEOTIDE SEQUENCE [LARGE SCALE GENOMIC DNA]</scope>
    <source>
        <strain>ATCC 35110 / GB-78</strain>
    </source>
</reference>
<organism>
    <name type="scientific">Chloroherpeton thalassium (strain ATCC 35110 / GB-78)</name>
    <dbReference type="NCBI Taxonomy" id="517418"/>
    <lineage>
        <taxon>Bacteria</taxon>
        <taxon>Pseudomonadati</taxon>
        <taxon>Chlorobiota</taxon>
        <taxon>Chlorobiia</taxon>
        <taxon>Chlorobiales</taxon>
        <taxon>Chloroherpetonaceae</taxon>
        <taxon>Chloroherpeton</taxon>
    </lineage>
</organism>
<evidence type="ECO:0000255" key="1">
    <source>
        <dbReference type="HAMAP-Rule" id="MF_01320"/>
    </source>
</evidence>
<evidence type="ECO:0000256" key="2">
    <source>
        <dbReference type="SAM" id="MobiDB-lite"/>
    </source>
</evidence>
<evidence type="ECO:0000305" key="3"/>
<protein>
    <recommendedName>
        <fullName evidence="1">Large ribosomal subunit protein uL2</fullName>
    </recommendedName>
    <alternativeName>
        <fullName evidence="3">50S ribosomal protein L2</fullName>
    </alternativeName>
</protein>
<proteinExistence type="inferred from homology"/>
<gene>
    <name evidence="1" type="primary">rplB</name>
    <name type="ordered locus">Ctha_1091</name>
</gene>
<feature type="chain" id="PRO_1000141525" description="Large ribosomal subunit protein uL2">
    <location>
        <begin position="1"/>
        <end position="280"/>
    </location>
</feature>
<feature type="region of interest" description="Disordered" evidence="2">
    <location>
        <begin position="32"/>
        <end position="54"/>
    </location>
</feature>
<feature type="region of interest" description="Disordered" evidence="2">
    <location>
        <begin position="221"/>
        <end position="280"/>
    </location>
</feature>
<feature type="compositionally biased region" description="Polar residues" evidence="2">
    <location>
        <begin position="37"/>
        <end position="49"/>
    </location>
</feature>
<feature type="compositionally biased region" description="Gly residues" evidence="2">
    <location>
        <begin position="232"/>
        <end position="242"/>
    </location>
</feature>
<feature type="compositionally biased region" description="Basic residues" evidence="2">
    <location>
        <begin position="257"/>
        <end position="280"/>
    </location>
</feature>
<dbReference type="EMBL" id="CP001100">
    <property type="protein sequence ID" value="ACF13555.1"/>
    <property type="molecule type" value="Genomic_DNA"/>
</dbReference>
<dbReference type="RefSeq" id="WP_012499639.1">
    <property type="nucleotide sequence ID" value="NC_011026.1"/>
</dbReference>
<dbReference type="SMR" id="B3QY27"/>
<dbReference type="STRING" id="517418.Ctha_1091"/>
<dbReference type="KEGG" id="cts:Ctha_1091"/>
<dbReference type="eggNOG" id="COG0090">
    <property type="taxonomic scope" value="Bacteria"/>
</dbReference>
<dbReference type="HOGENOM" id="CLU_036235_2_1_10"/>
<dbReference type="OrthoDB" id="9778722at2"/>
<dbReference type="Proteomes" id="UP000001208">
    <property type="component" value="Chromosome"/>
</dbReference>
<dbReference type="GO" id="GO:0015934">
    <property type="term" value="C:large ribosomal subunit"/>
    <property type="evidence" value="ECO:0007669"/>
    <property type="project" value="InterPro"/>
</dbReference>
<dbReference type="GO" id="GO:0019843">
    <property type="term" value="F:rRNA binding"/>
    <property type="evidence" value="ECO:0007669"/>
    <property type="project" value="UniProtKB-UniRule"/>
</dbReference>
<dbReference type="GO" id="GO:0003735">
    <property type="term" value="F:structural constituent of ribosome"/>
    <property type="evidence" value="ECO:0007669"/>
    <property type="project" value="InterPro"/>
</dbReference>
<dbReference type="GO" id="GO:0016740">
    <property type="term" value="F:transferase activity"/>
    <property type="evidence" value="ECO:0007669"/>
    <property type="project" value="InterPro"/>
</dbReference>
<dbReference type="GO" id="GO:0002181">
    <property type="term" value="P:cytoplasmic translation"/>
    <property type="evidence" value="ECO:0007669"/>
    <property type="project" value="TreeGrafter"/>
</dbReference>
<dbReference type="FunFam" id="2.30.30.30:FF:000001">
    <property type="entry name" value="50S ribosomal protein L2"/>
    <property type="match status" value="1"/>
</dbReference>
<dbReference type="FunFam" id="2.40.50.140:FF:000003">
    <property type="entry name" value="50S ribosomal protein L2"/>
    <property type="match status" value="1"/>
</dbReference>
<dbReference type="FunFam" id="4.10.950.10:FF:000001">
    <property type="entry name" value="50S ribosomal protein L2"/>
    <property type="match status" value="1"/>
</dbReference>
<dbReference type="Gene3D" id="2.30.30.30">
    <property type="match status" value="1"/>
</dbReference>
<dbReference type="Gene3D" id="2.40.50.140">
    <property type="entry name" value="Nucleic acid-binding proteins"/>
    <property type="match status" value="1"/>
</dbReference>
<dbReference type="Gene3D" id="4.10.950.10">
    <property type="entry name" value="Ribosomal protein L2, domain 3"/>
    <property type="match status" value="1"/>
</dbReference>
<dbReference type="HAMAP" id="MF_01320_B">
    <property type="entry name" value="Ribosomal_uL2_B"/>
    <property type="match status" value="1"/>
</dbReference>
<dbReference type="InterPro" id="IPR012340">
    <property type="entry name" value="NA-bd_OB-fold"/>
</dbReference>
<dbReference type="InterPro" id="IPR014722">
    <property type="entry name" value="Rib_uL2_dom2"/>
</dbReference>
<dbReference type="InterPro" id="IPR002171">
    <property type="entry name" value="Ribosomal_uL2"/>
</dbReference>
<dbReference type="InterPro" id="IPR005880">
    <property type="entry name" value="Ribosomal_uL2_bac/org-type"/>
</dbReference>
<dbReference type="InterPro" id="IPR022669">
    <property type="entry name" value="Ribosomal_uL2_C"/>
</dbReference>
<dbReference type="InterPro" id="IPR014726">
    <property type="entry name" value="Ribosomal_uL2_dom3"/>
</dbReference>
<dbReference type="InterPro" id="IPR022666">
    <property type="entry name" value="Ribosomal_uL2_RNA-bd_dom"/>
</dbReference>
<dbReference type="InterPro" id="IPR008991">
    <property type="entry name" value="Translation_prot_SH3-like_sf"/>
</dbReference>
<dbReference type="NCBIfam" id="TIGR01171">
    <property type="entry name" value="rplB_bact"/>
    <property type="match status" value="1"/>
</dbReference>
<dbReference type="PANTHER" id="PTHR13691:SF5">
    <property type="entry name" value="LARGE RIBOSOMAL SUBUNIT PROTEIN UL2M"/>
    <property type="match status" value="1"/>
</dbReference>
<dbReference type="PANTHER" id="PTHR13691">
    <property type="entry name" value="RIBOSOMAL PROTEIN L2"/>
    <property type="match status" value="1"/>
</dbReference>
<dbReference type="Pfam" id="PF00181">
    <property type="entry name" value="Ribosomal_L2"/>
    <property type="match status" value="1"/>
</dbReference>
<dbReference type="Pfam" id="PF03947">
    <property type="entry name" value="Ribosomal_L2_C"/>
    <property type="match status" value="1"/>
</dbReference>
<dbReference type="PIRSF" id="PIRSF002158">
    <property type="entry name" value="Ribosomal_L2"/>
    <property type="match status" value="1"/>
</dbReference>
<dbReference type="SMART" id="SM01383">
    <property type="entry name" value="Ribosomal_L2"/>
    <property type="match status" value="1"/>
</dbReference>
<dbReference type="SMART" id="SM01382">
    <property type="entry name" value="Ribosomal_L2_C"/>
    <property type="match status" value="1"/>
</dbReference>
<dbReference type="SUPFAM" id="SSF50249">
    <property type="entry name" value="Nucleic acid-binding proteins"/>
    <property type="match status" value="1"/>
</dbReference>
<dbReference type="SUPFAM" id="SSF50104">
    <property type="entry name" value="Translation proteins SH3-like domain"/>
    <property type="match status" value="1"/>
</dbReference>
<keyword id="KW-1185">Reference proteome</keyword>
<keyword id="KW-0687">Ribonucleoprotein</keyword>
<keyword id="KW-0689">Ribosomal protein</keyword>
<keyword id="KW-0694">RNA-binding</keyword>
<keyword id="KW-0699">rRNA-binding</keyword>
<comment type="function">
    <text evidence="1">One of the primary rRNA binding proteins. Required for association of the 30S and 50S subunits to form the 70S ribosome, for tRNA binding and peptide bond formation. It has been suggested to have peptidyltransferase activity; this is somewhat controversial. Makes several contacts with the 16S rRNA in the 70S ribosome.</text>
</comment>
<comment type="subunit">
    <text evidence="1">Part of the 50S ribosomal subunit. Forms a bridge to the 30S subunit in the 70S ribosome.</text>
</comment>
<comment type="similarity">
    <text evidence="1">Belongs to the universal ribosomal protein uL2 family.</text>
</comment>
<sequence length="280" mass="30731">MPVRILKPRTPGTRFFSYPSFEEITTDKPEKSLLVPNKSTGGRNNNGRVTSRHMGGGHKRYYRIIDFKRNKDGIPAKVATIEYDPNRTARIALLSYADGEKRYILAPNGIKVGDLIECGPEADIKVGNALPLKNIPVGIEVHNIEMRPGKGGQMARSAGSYAVLVAKEGDYATLKMPSGELRKVRVECKATVGVIGNLEHENLSLGKAGRSRWLGIRPQTRGMAMNPVDHPMGGGEGKSKSGGGRKHPKSPWGQKSKGLKTRKRKKASSKLIVRRRDSKK</sequence>
<name>RL2_CHLT3</name>